<feature type="signal peptide" evidence="1">
    <location>
        <begin position="1"/>
        <end position="20"/>
    </location>
</feature>
<feature type="chain" id="PRO_5036575562" description="Waprin-Thr1">
    <location>
        <begin position="21"/>
        <end position="110"/>
    </location>
</feature>
<feature type="domain" description="WAP" evidence="2">
    <location>
        <begin position="22"/>
        <end position="68"/>
    </location>
</feature>
<feature type="disulfide bond" evidence="2">
    <location>
        <begin position="29"/>
        <end position="55"/>
    </location>
</feature>
<feature type="disulfide bond" evidence="2">
    <location>
        <begin position="38"/>
        <end position="59"/>
    </location>
</feature>
<feature type="disulfide bond" evidence="2">
    <location>
        <begin position="42"/>
        <end position="54"/>
    </location>
</feature>
<feature type="disulfide bond" evidence="2">
    <location>
        <begin position="48"/>
        <end position="64"/>
    </location>
</feature>
<proteinExistence type="evidence at transcript level"/>
<evidence type="ECO:0000255" key="1"/>
<evidence type="ECO:0000255" key="2">
    <source>
        <dbReference type="PROSITE-ProRule" id="PRU00722"/>
    </source>
</evidence>
<evidence type="ECO:0000269" key="3">
    <source>
    </source>
</evidence>
<evidence type="ECO:0000303" key="4">
    <source>
    </source>
</evidence>
<evidence type="ECO:0000305" key="5"/>
<name>WAP_APIME</name>
<reference key="1">
    <citation type="submission" date="2010-11" db="EMBL/GenBank/DDBJ databases">
        <authorList>
            <consortium name="Honey bee genome project"/>
            <person name="Zhang L."/>
            <person name="Deng J."/>
            <person name="Wu Y.-Q."/>
            <person name="Kovar C."/>
            <person name="Aqrawi P."/>
            <person name="Bandaranaike D."/>
            <person name="Blankenburg K."/>
            <person name="Chen D."/>
            <person name="Denson S."/>
            <person name="Dinh H."/>
            <person name="Firestine M."/>
            <person name="Gross S."/>
            <person name="Han Y."/>
            <person name="Hernandez B."/>
            <person name="Holder M."/>
            <person name="Jackson L."/>
            <person name="Javaid M."/>
            <person name="Jing C."/>
            <person name="Jones J."/>
            <person name="Joshi V."/>
            <person name="Kamau G."/>
            <person name="Korchina V."/>
            <person name="Lee S."/>
            <person name="Lorensuhewa L."/>
            <person name="Mata R."/>
            <person name="Mathew T."/>
            <person name="Mims S."/>
            <person name="Ngo R."/>
            <person name="Nguyen L."/>
            <person name="Okwuonu G."/>
            <person name="Ongeri F."/>
            <person name="Osuji N."/>
            <person name="Pham C."/>
            <person name="Puazo M."/>
            <person name="Qu C."/>
            <person name="Quiroz J."/>
            <person name="Raj R."/>
            <person name="Rio Deiros D."/>
            <person name="Santibanez J."/>
            <person name="Scheel M."/>
            <person name="Scherer S."/>
            <person name="Vee V."/>
            <person name="Wang M."/>
            <person name="Xin Y."/>
            <person name="Richards S."/>
            <person name="Reid J.G."/>
            <person name="Newsham I."/>
            <person name="Worley K.C."/>
            <person name="Muzny D.M."/>
            <person name="Gibbs R."/>
        </authorList>
    </citation>
    <scope>NUCLEOTIDE SEQUENCE [LARGE SCALE GENOMIC DNA]</scope>
    <source>
        <strain>DH4</strain>
    </source>
</reference>
<reference key="2">
    <citation type="journal article" date="2023" name="Comp. Biochem. Physiol.">
        <title>Identification of waprin and its microbicidal activity: a novel protein component of honeybee (Apis mellifera) venom.</title>
        <authorList>
            <person name="Lee K.S."/>
            <person name="Kim B.Y."/>
            <person name="Kim Y.H."/>
            <person name="Choi Y.S."/>
            <person name="Jin B.R."/>
        </authorList>
    </citation>
    <scope>FUNCTION</scope>
    <scope>RECOMBINANT EXPRESSION</scope>
    <scope>SUBCELLULAR LOCATION</scope>
    <scope>TISSUE SPECIFICITY</scope>
    <source>
        <tissue>Venom</tissue>
        <tissue>Venom gland</tissue>
    </source>
</reference>
<dbReference type="RefSeq" id="XP_006570013.1">
    <property type="nucleotide sequence ID" value="XM_006569950.3"/>
</dbReference>
<dbReference type="SMR" id="A0A7M7H308"/>
<dbReference type="FunCoup" id="A0A7M7H308">
    <property type="interactions" value="1"/>
</dbReference>
<dbReference type="GeneID" id="102653764"/>
<dbReference type="KEGG" id="ame:102653764"/>
<dbReference type="InParanoid" id="A0A7M7H308"/>
<dbReference type="OMA" id="KVTNCTP"/>
<dbReference type="OrthoDB" id="8187079at2759"/>
<dbReference type="Proteomes" id="UP000005203">
    <property type="component" value="Linkage group LG5"/>
</dbReference>
<dbReference type="GO" id="GO:0005576">
    <property type="term" value="C:extracellular region"/>
    <property type="evidence" value="ECO:0000314"/>
    <property type="project" value="UniProtKB"/>
</dbReference>
<dbReference type="GO" id="GO:0030414">
    <property type="term" value="F:peptidase inhibitor activity"/>
    <property type="evidence" value="ECO:0000314"/>
    <property type="project" value="UniProtKB"/>
</dbReference>
<dbReference type="GO" id="GO:0004867">
    <property type="term" value="F:serine-type endopeptidase inhibitor activity"/>
    <property type="evidence" value="ECO:0007669"/>
    <property type="project" value="UniProtKB-KW"/>
</dbReference>
<dbReference type="GO" id="GO:0042742">
    <property type="term" value="P:defense response to bacterium"/>
    <property type="evidence" value="ECO:0007669"/>
    <property type="project" value="UniProtKB-KW"/>
</dbReference>
<dbReference type="GO" id="GO:0050832">
    <property type="term" value="P:defense response to fungus"/>
    <property type="evidence" value="ECO:0007669"/>
    <property type="project" value="UniProtKB-KW"/>
</dbReference>
<dbReference type="GO" id="GO:0031640">
    <property type="term" value="P:killing of cells of another organism"/>
    <property type="evidence" value="ECO:0007669"/>
    <property type="project" value="UniProtKB-KW"/>
</dbReference>
<dbReference type="GO" id="GO:0044278">
    <property type="term" value="P:venom-mediated disruption of cell wall in another organism"/>
    <property type="evidence" value="ECO:0000314"/>
    <property type="project" value="UniProtKB"/>
</dbReference>
<dbReference type="Gene3D" id="4.10.75.10">
    <property type="entry name" value="Elafin-like"/>
    <property type="match status" value="1"/>
</dbReference>
<dbReference type="InterPro" id="IPR036645">
    <property type="entry name" value="Elafin-like_sf"/>
</dbReference>
<dbReference type="InterPro" id="IPR008197">
    <property type="entry name" value="WAP_dom"/>
</dbReference>
<dbReference type="Pfam" id="PF00095">
    <property type="entry name" value="WAP"/>
    <property type="match status" value="1"/>
</dbReference>
<dbReference type="SMART" id="SM00217">
    <property type="entry name" value="WAP"/>
    <property type="match status" value="1"/>
</dbReference>
<dbReference type="SUPFAM" id="SSF57256">
    <property type="entry name" value="Elafin-like"/>
    <property type="match status" value="1"/>
</dbReference>
<dbReference type="PROSITE" id="PS51390">
    <property type="entry name" value="WAP"/>
    <property type="match status" value="1"/>
</dbReference>
<protein>
    <recommendedName>
        <fullName evidence="4">Waprin-Thr1</fullName>
    </recommendedName>
</protein>
<keyword id="KW-0044">Antibiotic</keyword>
<keyword id="KW-0929">Antimicrobial</keyword>
<keyword id="KW-1015">Disulfide bond</keyword>
<keyword id="KW-0295">Fungicide</keyword>
<keyword id="KW-0646">Protease inhibitor</keyword>
<keyword id="KW-1185">Reference proteome</keyword>
<keyword id="KW-0964">Secreted</keyword>
<keyword id="KW-0722">Serine protease inhibitor</keyword>
<keyword id="KW-0732">Signal</keyword>
<comment type="function">
    <text evidence="3">Antimicrobial peptides with activity against Gram-positive and Gram-negative bacteria as well as fungi (PubMed:36738900). Recognizes carbohydrates in the microbial cell walls, and induces structural damage to them (PubMed:36738900). Also inhibits microbial serine proteases subtilisin A and proteinase K, as well as human and porcine elastases (PubMed:36738900). Carbohydrates that are recognized are LPS, mannan, peptidoglycan, and N-acetl-D-glucosamine (PubMed:36738900).</text>
</comment>
<comment type="subcellular location">
    <subcellularLocation>
        <location evidence="3">Secreted</location>
    </subcellularLocation>
</comment>
<comment type="tissue specificity">
    <text evidence="3">Expressed by the venom gland.</text>
</comment>
<comment type="miscellaneous">
    <text evidence="3">Negative results: does not inhibit plasmin and thrombin. Does not show any hemolytic activity on mouse erythorcytes.</text>
</comment>
<comment type="similarity">
    <text evidence="5">Belongs to the venom waprin family. Cys-rich waprin subfamily.</text>
</comment>
<organism>
    <name type="scientific">Apis mellifera</name>
    <name type="common">Honeybee</name>
    <dbReference type="NCBI Taxonomy" id="7460"/>
    <lineage>
        <taxon>Eukaryota</taxon>
        <taxon>Metazoa</taxon>
        <taxon>Ecdysozoa</taxon>
        <taxon>Arthropoda</taxon>
        <taxon>Hexapoda</taxon>
        <taxon>Insecta</taxon>
        <taxon>Pterygota</taxon>
        <taxon>Neoptera</taxon>
        <taxon>Endopterygota</taxon>
        <taxon>Hymenoptera</taxon>
        <taxon>Apocrita</taxon>
        <taxon>Aculeata</taxon>
        <taxon>Apoidea</taxon>
        <taxon>Anthophila</taxon>
        <taxon>Apidae</taxon>
        <taxon>Apis</taxon>
    </lineage>
</organism>
<sequence>MYKKGTILVLAYLLIATAVCQLSYKEGHCPLRNSVSKCIPRCVSDYQCSFNEKCCPNKCGSESCVQASPINTGNGYKGSNDDVYCAGVKCGPYEKCQFDRKTKREKCVRT</sequence>
<accession>A0A7M7H308</accession>
<accession>A0A8B6Z7I0</accession>